<gene>
    <name evidence="1" type="primary">mdh</name>
    <name type="ordered locus">YE0414</name>
</gene>
<reference key="1">
    <citation type="journal article" date="2006" name="PLoS Genet.">
        <title>The complete genome sequence and comparative genome analysis of the high pathogenicity Yersinia enterocolitica strain 8081.</title>
        <authorList>
            <person name="Thomson N.R."/>
            <person name="Howard S."/>
            <person name="Wren B.W."/>
            <person name="Holden M.T.G."/>
            <person name="Crossman L."/>
            <person name="Challis G.L."/>
            <person name="Churcher C."/>
            <person name="Mungall K."/>
            <person name="Brooks K."/>
            <person name="Chillingworth T."/>
            <person name="Feltwell T."/>
            <person name="Abdellah Z."/>
            <person name="Hauser H."/>
            <person name="Jagels K."/>
            <person name="Maddison M."/>
            <person name="Moule S."/>
            <person name="Sanders M."/>
            <person name="Whitehead S."/>
            <person name="Quail M.A."/>
            <person name="Dougan G."/>
            <person name="Parkhill J."/>
            <person name="Prentice M.B."/>
        </authorList>
    </citation>
    <scope>NUCLEOTIDE SEQUENCE [LARGE SCALE GENOMIC DNA]</scope>
    <source>
        <strain>NCTC 13174 / 8081</strain>
    </source>
</reference>
<feature type="chain" id="PRO_0000294312" description="Malate dehydrogenase">
    <location>
        <begin position="1"/>
        <end position="311"/>
    </location>
</feature>
<feature type="active site" description="Proton acceptor" evidence="1">
    <location>
        <position position="177"/>
    </location>
</feature>
<feature type="binding site" evidence="1">
    <location>
        <begin position="7"/>
        <end position="13"/>
    </location>
    <ligand>
        <name>NAD(+)</name>
        <dbReference type="ChEBI" id="CHEBI:57540"/>
    </ligand>
</feature>
<feature type="binding site" evidence="1">
    <location>
        <position position="34"/>
    </location>
    <ligand>
        <name>NAD(+)</name>
        <dbReference type="ChEBI" id="CHEBI:57540"/>
    </ligand>
</feature>
<feature type="binding site" evidence="1">
    <location>
        <position position="81"/>
    </location>
    <ligand>
        <name>substrate</name>
    </ligand>
</feature>
<feature type="binding site" evidence="1">
    <location>
        <position position="87"/>
    </location>
    <ligand>
        <name>substrate</name>
    </ligand>
</feature>
<feature type="binding site" evidence="1">
    <location>
        <position position="94"/>
    </location>
    <ligand>
        <name>NAD(+)</name>
        <dbReference type="ChEBI" id="CHEBI:57540"/>
    </ligand>
</feature>
<feature type="binding site" evidence="1">
    <location>
        <begin position="117"/>
        <end position="119"/>
    </location>
    <ligand>
        <name>NAD(+)</name>
        <dbReference type="ChEBI" id="CHEBI:57540"/>
    </ligand>
</feature>
<feature type="binding site" evidence="1">
    <location>
        <position position="119"/>
    </location>
    <ligand>
        <name>substrate</name>
    </ligand>
</feature>
<feature type="binding site" evidence="1">
    <location>
        <position position="153"/>
    </location>
    <ligand>
        <name>substrate</name>
    </ligand>
</feature>
<feature type="binding site" evidence="1">
    <location>
        <position position="227"/>
    </location>
    <ligand>
        <name>NAD(+)</name>
        <dbReference type="ChEBI" id="CHEBI:57540"/>
    </ligand>
</feature>
<keyword id="KW-0520">NAD</keyword>
<keyword id="KW-0560">Oxidoreductase</keyword>
<keyword id="KW-0816">Tricarboxylic acid cycle</keyword>
<sequence length="311" mass="32582">MKVAVLGAAGGIGQALALLLKTQLPSGSDLSLYDIAPVTPGVAVDLSHIPTAVNIKGFSGEDATPALKGADIVLISAGVARKPGMDRSDLFNVNAGIVRNLVEQIARTCPKALIGIITNPVNTTVAIAAEVLKKAGVYDKNKLFGITTLDTIRSNTFVAELKGKQPQDIEVPVIGGHSGVTILPLLSQIPGISFTEQEVIDLTKRIQNAGTEVVEAKAGGGSATLSMGQAAARFGLSLVRALQGESNVVECSYVEGDGKYARFFAQPILLGKDGVAERKDIGKLSAFEQQALENMLDVLHKDIELGEQFVK</sequence>
<evidence type="ECO:0000255" key="1">
    <source>
        <dbReference type="HAMAP-Rule" id="MF_01516"/>
    </source>
</evidence>
<accession>A1JIV0</accession>
<protein>
    <recommendedName>
        <fullName evidence="1">Malate dehydrogenase</fullName>
        <ecNumber evidence="1">1.1.1.37</ecNumber>
    </recommendedName>
</protein>
<name>MDH_YERE8</name>
<comment type="function">
    <text evidence="1">Catalyzes the reversible oxidation of malate to oxaloacetate.</text>
</comment>
<comment type="catalytic activity">
    <reaction evidence="1">
        <text>(S)-malate + NAD(+) = oxaloacetate + NADH + H(+)</text>
        <dbReference type="Rhea" id="RHEA:21432"/>
        <dbReference type="ChEBI" id="CHEBI:15378"/>
        <dbReference type="ChEBI" id="CHEBI:15589"/>
        <dbReference type="ChEBI" id="CHEBI:16452"/>
        <dbReference type="ChEBI" id="CHEBI:57540"/>
        <dbReference type="ChEBI" id="CHEBI:57945"/>
        <dbReference type="EC" id="1.1.1.37"/>
    </reaction>
</comment>
<comment type="subunit">
    <text evidence="1">Homodimer.</text>
</comment>
<comment type="similarity">
    <text evidence="1">Belongs to the LDH/MDH superfamily. MDH type 1 family.</text>
</comment>
<organism>
    <name type="scientific">Yersinia enterocolitica serotype O:8 / biotype 1B (strain NCTC 13174 / 8081)</name>
    <dbReference type="NCBI Taxonomy" id="393305"/>
    <lineage>
        <taxon>Bacteria</taxon>
        <taxon>Pseudomonadati</taxon>
        <taxon>Pseudomonadota</taxon>
        <taxon>Gammaproteobacteria</taxon>
        <taxon>Enterobacterales</taxon>
        <taxon>Yersiniaceae</taxon>
        <taxon>Yersinia</taxon>
    </lineage>
</organism>
<proteinExistence type="inferred from homology"/>
<dbReference type="EC" id="1.1.1.37" evidence="1"/>
<dbReference type="EMBL" id="AM286415">
    <property type="protein sequence ID" value="CAL10541.1"/>
    <property type="molecule type" value="Genomic_DNA"/>
</dbReference>
<dbReference type="RefSeq" id="WP_005156310.1">
    <property type="nucleotide sequence ID" value="NC_008800.1"/>
</dbReference>
<dbReference type="RefSeq" id="YP_001004786.1">
    <property type="nucleotide sequence ID" value="NC_008800.1"/>
</dbReference>
<dbReference type="SMR" id="A1JIV0"/>
<dbReference type="GeneID" id="31411593"/>
<dbReference type="KEGG" id="yen:YE0414"/>
<dbReference type="PATRIC" id="fig|393305.7.peg.510"/>
<dbReference type="eggNOG" id="COG0039">
    <property type="taxonomic scope" value="Bacteria"/>
</dbReference>
<dbReference type="HOGENOM" id="CLU_047181_1_0_6"/>
<dbReference type="OrthoDB" id="9802969at2"/>
<dbReference type="Proteomes" id="UP000000642">
    <property type="component" value="Chromosome"/>
</dbReference>
<dbReference type="GO" id="GO:0005737">
    <property type="term" value="C:cytoplasm"/>
    <property type="evidence" value="ECO:0007669"/>
    <property type="project" value="TreeGrafter"/>
</dbReference>
<dbReference type="GO" id="GO:0030060">
    <property type="term" value="F:L-malate dehydrogenase (NAD+) activity"/>
    <property type="evidence" value="ECO:0007669"/>
    <property type="project" value="UniProtKB-UniRule"/>
</dbReference>
<dbReference type="GO" id="GO:0006108">
    <property type="term" value="P:malate metabolic process"/>
    <property type="evidence" value="ECO:0007669"/>
    <property type="project" value="InterPro"/>
</dbReference>
<dbReference type="GO" id="GO:0006099">
    <property type="term" value="P:tricarboxylic acid cycle"/>
    <property type="evidence" value="ECO:0007669"/>
    <property type="project" value="UniProtKB-UniRule"/>
</dbReference>
<dbReference type="CDD" id="cd01337">
    <property type="entry name" value="MDH_glyoxysomal_mitochondrial"/>
    <property type="match status" value="1"/>
</dbReference>
<dbReference type="FunFam" id="3.40.50.720:FF:000017">
    <property type="entry name" value="Malate dehydrogenase"/>
    <property type="match status" value="1"/>
</dbReference>
<dbReference type="FunFam" id="3.90.110.10:FF:000001">
    <property type="entry name" value="Malate dehydrogenase"/>
    <property type="match status" value="1"/>
</dbReference>
<dbReference type="Gene3D" id="3.90.110.10">
    <property type="entry name" value="Lactate dehydrogenase/glycoside hydrolase, family 4, C-terminal"/>
    <property type="match status" value="1"/>
</dbReference>
<dbReference type="Gene3D" id="3.40.50.720">
    <property type="entry name" value="NAD(P)-binding Rossmann-like Domain"/>
    <property type="match status" value="1"/>
</dbReference>
<dbReference type="HAMAP" id="MF_01516">
    <property type="entry name" value="Malate_dehydrog_1"/>
    <property type="match status" value="1"/>
</dbReference>
<dbReference type="InterPro" id="IPR001557">
    <property type="entry name" value="L-lactate/malate_DH"/>
</dbReference>
<dbReference type="InterPro" id="IPR022383">
    <property type="entry name" value="Lactate/malate_DH_C"/>
</dbReference>
<dbReference type="InterPro" id="IPR001236">
    <property type="entry name" value="Lactate/malate_DH_N"/>
</dbReference>
<dbReference type="InterPro" id="IPR015955">
    <property type="entry name" value="Lactate_DH/Glyco_Ohase_4_C"/>
</dbReference>
<dbReference type="InterPro" id="IPR001252">
    <property type="entry name" value="Malate_DH_AS"/>
</dbReference>
<dbReference type="InterPro" id="IPR010097">
    <property type="entry name" value="Malate_DH_type1"/>
</dbReference>
<dbReference type="InterPro" id="IPR023958">
    <property type="entry name" value="Malate_DH_type1_bac"/>
</dbReference>
<dbReference type="InterPro" id="IPR036291">
    <property type="entry name" value="NAD(P)-bd_dom_sf"/>
</dbReference>
<dbReference type="NCBIfam" id="TIGR01772">
    <property type="entry name" value="MDH_euk_gproteo"/>
    <property type="match status" value="1"/>
</dbReference>
<dbReference type="PANTHER" id="PTHR11540">
    <property type="entry name" value="MALATE AND LACTATE DEHYDROGENASE"/>
    <property type="match status" value="1"/>
</dbReference>
<dbReference type="PANTHER" id="PTHR11540:SF16">
    <property type="entry name" value="MALATE DEHYDROGENASE, MITOCHONDRIAL"/>
    <property type="match status" value="1"/>
</dbReference>
<dbReference type="Pfam" id="PF02866">
    <property type="entry name" value="Ldh_1_C"/>
    <property type="match status" value="1"/>
</dbReference>
<dbReference type="Pfam" id="PF00056">
    <property type="entry name" value="Ldh_1_N"/>
    <property type="match status" value="1"/>
</dbReference>
<dbReference type="PIRSF" id="PIRSF000102">
    <property type="entry name" value="Lac_mal_DH"/>
    <property type="match status" value="1"/>
</dbReference>
<dbReference type="SUPFAM" id="SSF56327">
    <property type="entry name" value="LDH C-terminal domain-like"/>
    <property type="match status" value="1"/>
</dbReference>
<dbReference type="SUPFAM" id="SSF51735">
    <property type="entry name" value="NAD(P)-binding Rossmann-fold domains"/>
    <property type="match status" value="1"/>
</dbReference>
<dbReference type="PROSITE" id="PS00068">
    <property type="entry name" value="MDH"/>
    <property type="match status" value="1"/>
</dbReference>